<keyword id="KW-0333">Golgi apparatus</keyword>
<keyword id="KW-1185">Reference proteome</keyword>
<protein>
    <recommendedName>
        <fullName evidence="2">Golgi-associated RAB2 interactor protein 1B</fullName>
    </recommendedName>
</protein>
<accession>Q68FV5</accession>
<reference key="1">
    <citation type="journal article" date="2004" name="Genome Res.">
        <title>The status, quality, and expansion of the NIH full-length cDNA project: the Mammalian Gene Collection (MGC).</title>
        <authorList>
            <consortium name="The MGC Project Team"/>
        </authorList>
    </citation>
    <scope>NUCLEOTIDE SEQUENCE [LARGE SCALE MRNA]</scope>
    <source>
        <tissue>Testis</tissue>
    </source>
</reference>
<sequence length="344" mass="38996">MMTSVPPRKTWWKSKKTVKVRRSYSTFPSLNAWEKFRGLLPVDGETNPGVGLGVEEGLLCQMVHSPEFNLFPNSVVFESNFVQVRRSRDWKEIYKASNTMALGVTSSVPCLPLPNILLMARVIWHQGQSQTWNRPSTVPSINLKSILPLKFVELQIWDHHERILRLRTVTEKIYFLKLHPDHPETVFRFWIRLVQILHKGLSITTKDPTILVTHCLVPKSLCSPGGKSELVQKNSKGLQPSESLTHLMAQGESEALSQIFSDLHQQKQYSSSRSEKVQINKTSSEKATPCEDSIPCTCDLNWRDAFMFGEWERENPSGPQPHSLLSTLAASSRPRLSLIGGNSI</sequence>
<dbReference type="EMBL" id="BC079297">
    <property type="protein sequence ID" value="AAH79297.1"/>
    <property type="molecule type" value="mRNA"/>
</dbReference>
<dbReference type="RefSeq" id="NP_001019495.1">
    <property type="nucleotide sequence ID" value="NM_001024324.1"/>
</dbReference>
<dbReference type="FunCoup" id="Q68FV5">
    <property type="interactions" value="35"/>
</dbReference>
<dbReference type="STRING" id="10116.ENSRNOP00000047959"/>
<dbReference type="PhosphoSitePlus" id="Q68FV5"/>
<dbReference type="PaxDb" id="10116-ENSRNOP00000047959"/>
<dbReference type="GeneID" id="500061"/>
<dbReference type="KEGG" id="rno:500061"/>
<dbReference type="UCSC" id="RGD:1564147">
    <property type="organism name" value="rat"/>
</dbReference>
<dbReference type="AGR" id="RGD:1564147"/>
<dbReference type="CTD" id="84691"/>
<dbReference type="RGD" id="1564147">
    <property type="gene designation" value="Garin1b"/>
</dbReference>
<dbReference type="eggNOG" id="ENOG502S7XV">
    <property type="taxonomic scope" value="Eukaryota"/>
</dbReference>
<dbReference type="InParanoid" id="Q68FV5"/>
<dbReference type="PhylomeDB" id="Q68FV5"/>
<dbReference type="PRO" id="PR:Q68FV5"/>
<dbReference type="Proteomes" id="UP000002494">
    <property type="component" value="Unplaced"/>
</dbReference>
<dbReference type="GO" id="GO:0005794">
    <property type="term" value="C:Golgi apparatus"/>
    <property type="evidence" value="ECO:0000250"/>
    <property type="project" value="UniProtKB"/>
</dbReference>
<dbReference type="GO" id="GO:0001675">
    <property type="term" value="P:acrosome assembly"/>
    <property type="evidence" value="ECO:0000250"/>
    <property type="project" value="UniProtKB"/>
</dbReference>
<dbReference type="GO" id="GO:0007340">
    <property type="term" value="P:acrosome reaction"/>
    <property type="evidence" value="ECO:0000250"/>
    <property type="project" value="UniProtKB"/>
</dbReference>
<dbReference type="InterPro" id="IPR022168">
    <property type="entry name" value="GARIL-like_Rab2B-bd"/>
</dbReference>
<dbReference type="PANTHER" id="PTHR22574">
    <property type="match status" value="1"/>
</dbReference>
<dbReference type="PANTHER" id="PTHR22574:SF13">
    <property type="entry name" value="GOLGI-ASSOCIATED RAB2 INTERACTOR PROTEIN 1B"/>
    <property type="match status" value="1"/>
</dbReference>
<dbReference type="Pfam" id="PF12480">
    <property type="entry name" value="GARIL_Rab2_bd"/>
    <property type="match status" value="1"/>
</dbReference>
<organism>
    <name type="scientific">Rattus norvegicus</name>
    <name type="common">Rat</name>
    <dbReference type="NCBI Taxonomy" id="10116"/>
    <lineage>
        <taxon>Eukaryota</taxon>
        <taxon>Metazoa</taxon>
        <taxon>Chordata</taxon>
        <taxon>Craniata</taxon>
        <taxon>Vertebrata</taxon>
        <taxon>Euteleostomi</taxon>
        <taxon>Mammalia</taxon>
        <taxon>Eutheria</taxon>
        <taxon>Euarchontoglires</taxon>
        <taxon>Glires</taxon>
        <taxon>Rodentia</taxon>
        <taxon>Myomorpha</taxon>
        <taxon>Muroidea</taxon>
        <taxon>Muridae</taxon>
        <taxon>Murinae</taxon>
        <taxon>Rattus</taxon>
    </lineage>
</organism>
<comment type="function">
    <text evidence="1">RAB2B effector protein required for accurate acrosome formation and normal male fertility. In complex with RAB2A/RAB2B, seems to suppress excessive vesicle trafficking during acrosome formation.</text>
</comment>
<comment type="subcellular location">
    <subcellularLocation>
        <location evidence="1">Golgi apparatus</location>
    </subcellularLocation>
</comment>
<comment type="similarity">
    <text evidence="2">Belongs to the GARIN family.</text>
</comment>
<evidence type="ECO:0000250" key="1">
    <source>
        <dbReference type="UniProtKB" id="Q3UZD7"/>
    </source>
</evidence>
<evidence type="ECO:0000305" key="2"/>
<gene>
    <name type="primary">Garin1b</name>
    <name type="synonym">Fam137a</name>
    <name type="synonym">Fam71f1</name>
</gene>
<name>GAR1B_RAT</name>
<feature type="chain" id="PRO_0000311688" description="Golgi-associated RAB2 interactor protein 1B">
    <location>
        <begin position="1"/>
        <end position="344"/>
    </location>
</feature>
<proteinExistence type="evidence at transcript level"/>